<gene>
    <name type="primary">Lgr5</name>
</gene>
<reference key="1">
    <citation type="journal article" date="2004" name="Nature">
        <title>Genome sequence of the Brown Norway rat yields insights into mammalian evolution.</title>
        <authorList>
            <person name="Gibbs R.A."/>
            <person name="Weinstock G.M."/>
            <person name="Metzker M.L."/>
            <person name="Muzny D.M."/>
            <person name="Sodergren E.J."/>
            <person name="Scherer S."/>
            <person name="Scott G."/>
            <person name="Steffen D."/>
            <person name="Worley K.C."/>
            <person name="Burch P.E."/>
            <person name="Okwuonu G."/>
            <person name="Hines S."/>
            <person name="Lewis L."/>
            <person name="Deramo C."/>
            <person name="Delgado O."/>
            <person name="Dugan-Rocha S."/>
            <person name="Miner G."/>
            <person name="Morgan M."/>
            <person name="Hawes A."/>
            <person name="Gill R."/>
            <person name="Holt R.A."/>
            <person name="Adams M.D."/>
            <person name="Amanatides P.G."/>
            <person name="Baden-Tillson H."/>
            <person name="Barnstead M."/>
            <person name="Chin S."/>
            <person name="Evans C.A."/>
            <person name="Ferriera S."/>
            <person name="Fosler C."/>
            <person name="Glodek A."/>
            <person name="Gu Z."/>
            <person name="Jennings D."/>
            <person name="Kraft C.L."/>
            <person name="Nguyen T."/>
            <person name="Pfannkoch C.M."/>
            <person name="Sitter C."/>
            <person name="Sutton G.G."/>
            <person name="Venter J.C."/>
            <person name="Woodage T."/>
            <person name="Smith D."/>
            <person name="Lee H.-M."/>
            <person name="Gustafson E."/>
            <person name="Cahill P."/>
            <person name="Kana A."/>
            <person name="Doucette-Stamm L."/>
            <person name="Weinstock K."/>
            <person name="Fechtel K."/>
            <person name="Weiss R.B."/>
            <person name="Dunn D.M."/>
            <person name="Green E.D."/>
            <person name="Blakesley R.W."/>
            <person name="Bouffard G.G."/>
            <person name="De Jong P.J."/>
            <person name="Osoegawa K."/>
            <person name="Zhu B."/>
            <person name="Marra M."/>
            <person name="Schein J."/>
            <person name="Bosdet I."/>
            <person name="Fjell C."/>
            <person name="Jones S."/>
            <person name="Krzywinski M."/>
            <person name="Mathewson C."/>
            <person name="Siddiqui A."/>
            <person name="Wye N."/>
            <person name="McPherson J."/>
            <person name="Zhao S."/>
            <person name="Fraser C.M."/>
            <person name="Shetty J."/>
            <person name="Shatsman S."/>
            <person name="Geer K."/>
            <person name="Chen Y."/>
            <person name="Abramzon S."/>
            <person name="Nierman W.C."/>
            <person name="Havlak P.H."/>
            <person name="Chen R."/>
            <person name="Durbin K.J."/>
            <person name="Egan A."/>
            <person name="Ren Y."/>
            <person name="Song X.-Z."/>
            <person name="Li B."/>
            <person name="Liu Y."/>
            <person name="Qin X."/>
            <person name="Cawley S."/>
            <person name="Cooney A.J."/>
            <person name="D'Souza L.M."/>
            <person name="Martin K."/>
            <person name="Wu J.Q."/>
            <person name="Gonzalez-Garay M.L."/>
            <person name="Jackson A.R."/>
            <person name="Kalafus K.J."/>
            <person name="McLeod M.P."/>
            <person name="Milosavljevic A."/>
            <person name="Virk D."/>
            <person name="Volkov A."/>
            <person name="Wheeler D.A."/>
            <person name="Zhang Z."/>
            <person name="Bailey J.A."/>
            <person name="Eichler E.E."/>
            <person name="Tuzun E."/>
            <person name="Birney E."/>
            <person name="Mongin E."/>
            <person name="Ureta-Vidal A."/>
            <person name="Woodwark C."/>
            <person name="Zdobnov E."/>
            <person name="Bork P."/>
            <person name="Suyama M."/>
            <person name="Torrents D."/>
            <person name="Alexandersson M."/>
            <person name="Trask B.J."/>
            <person name="Young J.M."/>
            <person name="Huang H."/>
            <person name="Wang H."/>
            <person name="Xing H."/>
            <person name="Daniels S."/>
            <person name="Gietzen D."/>
            <person name="Schmidt J."/>
            <person name="Stevens K."/>
            <person name="Vitt U."/>
            <person name="Wingrove J."/>
            <person name="Camara F."/>
            <person name="Mar Alba M."/>
            <person name="Abril J.F."/>
            <person name="Guigo R."/>
            <person name="Smit A."/>
            <person name="Dubchak I."/>
            <person name="Rubin E.M."/>
            <person name="Couronne O."/>
            <person name="Poliakov A."/>
            <person name="Huebner N."/>
            <person name="Ganten D."/>
            <person name="Goesele C."/>
            <person name="Hummel O."/>
            <person name="Kreitler T."/>
            <person name="Lee Y.-A."/>
            <person name="Monti J."/>
            <person name="Schulz H."/>
            <person name="Zimdahl H."/>
            <person name="Himmelbauer H."/>
            <person name="Lehrach H."/>
            <person name="Jacob H.J."/>
            <person name="Bromberg S."/>
            <person name="Gullings-Handley J."/>
            <person name="Jensen-Seaman M.I."/>
            <person name="Kwitek A.E."/>
            <person name="Lazar J."/>
            <person name="Pasko D."/>
            <person name="Tonellato P.J."/>
            <person name="Twigger S."/>
            <person name="Ponting C.P."/>
            <person name="Duarte J.M."/>
            <person name="Rice S."/>
            <person name="Goodstadt L."/>
            <person name="Beatson S.A."/>
            <person name="Emes R.D."/>
            <person name="Winter E.E."/>
            <person name="Webber C."/>
            <person name="Brandt P."/>
            <person name="Nyakatura G."/>
            <person name="Adetobi M."/>
            <person name="Chiaromonte F."/>
            <person name="Elnitski L."/>
            <person name="Eswara P."/>
            <person name="Hardison R.C."/>
            <person name="Hou M."/>
            <person name="Kolbe D."/>
            <person name="Makova K."/>
            <person name="Miller W."/>
            <person name="Nekrutenko A."/>
            <person name="Riemer C."/>
            <person name="Schwartz S."/>
            <person name="Taylor J."/>
            <person name="Yang S."/>
            <person name="Zhang Y."/>
            <person name="Lindpaintner K."/>
            <person name="Andrews T.D."/>
            <person name="Caccamo M."/>
            <person name="Clamp M."/>
            <person name="Clarke L."/>
            <person name="Curwen V."/>
            <person name="Durbin R.M."/>
            <person name="Eyras E."/>
            <person name="Searle S.M."/>
            <person name="Cooper G.M."/>
            <person name="Batzoglou S."/>
            <person name="Brudno M."/>
            <person name="Sidow A."/>
            <person name="Stone E.A."/>
            <person name="Payseur B.A."/>
            <person name="Bourque G."/>
            <person name="Lopez-Otin C."/>
            <person name="Puente X.S."/>
            <person name="Chakrabarti K."/>
            <person name="Chatterji S."/>
            <person name="Dewey C."/>
            <person name="Pachter L."/>
            <person name="Bray N."/>
            <person name="Yap V.B."/>
            <person name="Caspi A."/>
            <person name="Tesler G."/>
            <person name="Pevzner P.A."/>
            <person name="Haussler D."/>
            <person name="Roskin K.M."/>
            <person name="Baertsch R."/>
            <person name="Clawson H."/>
            <person name="Furey T.S."/>
            <person name="Hinrichs A.S."/>
            <person name="Karolchik D."/>
            <person name="Kent W.J."/>
            <person name="Rosenbloom K.R."/>
            <person name="Trumbower H."/>
            <person name="Weirauch M."/>
            <person name="Cooper D.N."/>
            <person name="Stenson P.D."/>
            <person name="Ma B."/>
            <person name="Brent M."/>
            <person name="Arumugam M."/>
            <person name="Shteynberg D."/>
            <person name="Copley R.R."/>
            <person name="Taylor M.S."/>
            <person name="Riethman H."/>
            <person name="Mudunuri U."/>
            <person name="Peterson J."/>
            <person name="Guyer M."/>
            <person name="Felsenfeld A."/>
            <person name="Old S."/>
            <person name="Mockrin S."/>
            <person name="Collins F.S."/>
        </authorList>
    </citation>
    <scope>NUCLEOTIDE SEQUENCE [LARGE SCALE GENOMIC DNA]</scope>
    <source>
        <strain>Brown Norway</strain>
    </source>
</reference>
<reference key="2">
    <citation type="submission" date="2005-09" db="EMBL/GenBank/DDBJ databases">
        <authorList>
            <person name="Mural R.J."/>
            <person name="Adams M.D."/>
            <person name="Myers E.W."/>
            <person name="Smith H.O."/>
            <person name="Venter J.C."/>
        </authorList>
    </citation>
    <scope>NUCLEOTIDE SEQUENCE [LARGE SCALE GENOMIC DNA]</scope>
    <source>
        <strain>Brown Norway</strain>
    </source>
</reference>
<comment type="function">
    <text evidence="1">Receptor for R-spondins that potentiates the canonical Wnt signaling pathway and acts as a stem cell marker of the intestinal epithelium and the hair follicle. Upon binding to R-spondins (RSPO1, RSPO2, RSPO3 or RSPO4), associates with phosphorylated LRP6 and frizzled receptors that are activated by extracellular Wnt receptors, triggering the canonical Wnt signaling pathway to increase expression of target genes. In contrast to classical G-protein coupled receptors, does not activate heterotrimeric G-proteins to transduce the signal. Involved in the development and/or maintenance of the adult intestinal stem cells during postembryonic development (By similarity).</text>
</comment>
<comment type="subunit">
    <text evidence="2">Identified in a complex composed of RNF43, LGR5 and RSPO1 (By similarity). Also interacts with other R-spondin ligands, including RSPO2, RSPO3 and RSPO4 (By similarity).</text>
</comment>
<comment type="subcellular location">
    <subcellularLocation>
        <location evidence="1">Cell membrane</location>
        <topology evidence="1">Multi-pass membrane protein</topology>
    </subcellularLocation>
    <subcellularLocation>
        <location evidence="1">Golgi apparatus</location>
        <location evidence="1">trans-Golgi network membrane</location>
        <topology evidence="1">Multi-pass membrane protein</topology>
    </subcellularLocation>
    <text evidence="1">Rapidly and constitutively internalized to the trans-Golgi network at steady state.</text>
</comment>
<comment type="similarity">
    <text evidence="4">Belongs to the G-protein coupled receptor 1 family.</text>
</comment>
<name>LGR5_RAT</name>
<dbReference type="EMBL" id="AABR06049740">
    <property type="status" value="NOT_ANNOTATED_CDS"/>
    <property type="molecule type" value="Genomic_DNA"/>
</dbReference>
<dbReference type="EMBL" id="AABR06049741">
    <property type="status" value="NOT_ANNOTATED_CDS"/>
    <property type="molecule type" value="Genomic_DNA"/>
</dbReference>
<dbReference type="EMBL" id="AABR06049742">
    <property type="status" value="NOT_ANNOTATED_CDS"/>
    <property type="molecule type" value="Genomic_DNA"/>
</dbReference>
<dbReference type="EMBL" id="AABR06049743">
    <property type="status" value="NOT_ANNOTATED_CDS"/>
    <property type="molecule type" value="Genomic_DNA"/>
</dbReference>
<dbReference type="EMBL" id="AABR06049744">
    <property type="status" value="NOT_ANNOTATED_CDS"/>
    <property type="molecule type" value="Genomic_DNA"/>
</dbReference>
<dbReference type="EMBL" id="CH473960">
    <property type="protein sequence ID" value="EDM16685.1"/>
    <property type="molecule type" value="Genomic_DNA"/>
</dbReference>
<dbReference type="RefSeq" id="NP_001100254.1">
    <property type="nucleotide sequence ID" value="NM_001106784.1"/>
</dbReference>
<dbReference type="SMR" id="D4AC13"/>
<dbReference type="FunCoup" id="D4AC13">
    <property type="interactions" value="304"/>
</dbReference>
<dbReference type="STRING" id="10116.ENSRNOP00000005814"/>
<dbReference type="GlyCosmos" id="D4AC13">
    <property type="glycosylation" value="3 sites, No reported glycans"/>
</dbReference>
<dbReference type="GlyGen" id="D4AC13">
    <property type="glycosylation" value="3 sites"/>
</dbReference>
<dbReference type="PhosphoSitePlus" id="D4AC13"/>
<dbReference type="PaxDb" id="10116-ENSRNOP00000005814"/>
<dbReference type="Ensembl" id="ENSRNOT00000005814.5">
    <property type="protein sequence ID" value="ENSRNOP00000005814.3"/>
    <property type="gene ID" value="ENSRNOG00000004221.6"/>
</dbReference>
<dbReference type="GeneID" id="299802"/>
<dbReference type="KEGG" id="rno:299802"/>
<dbReference type="UCSC" id="RGD:1307733">
    <property type="organism name" value="rat"/>
</dbReference>
<dbReference type="AGR" id="RGD:1307733"/>
<dbReference type="CTD" id="8549"/>
<dbReference type="RGD" id="1307733">
    <property type="gene designation" value="Lgr5"/>
</dbReference>
<dbReference type="eggNOG" id="KOG0619">
    <property type="taxonomic scope" value="Eukaryota"/>
</dbReference>
<dbReference type="eggNOG" id="KOG2087">
    <property type="taxonomic scope" value="Eukaryota"/>
</dbReference>
<dbReference type="GeneTree" id="ENSGT00940000160214"/>
<dbReference type="HOGENOM" id="CLU_006843_0_0_1"/>
<dbReference type="InParanoid" id="D4AC13"/>
<dbReference type="OMA" id="PSSMGFM"/>
<dbReference type="OrthoDB" id="1883493at2759"/>
<dbReference type="PhylomeDB" id="D4AC13"/>
<dbReference type="TreeFam" id="TF316814"/>
<dbReference type="Reactome" id="R-RNO-4641263">
    <property type="pathway name" value="Regulation of FZD by ubiquitination"/>
</dbReference>
<dbReference type="PRO" id="PR:D4AC13"/>
<dbReference type="Proteomes" id="UP000002494">
    <property type="component" value="Chromosome 7"/>
</dbReference>
<dbReference type="Proteomes" id="UP000234681">
    <property type="component" value="Chromosome 7"/>
</dbReference>
<dbReference type="Bgee" id="ENSRNOG00000004221">
    <property type="expression patterns" value="Expressed in cerebellum and 11 other cell types or tissues"/>
</dbReference>
<dbReference type="GO" id="GO:0005886">
    <property type="term" value="C:plasma membrane"/>
    <property type="evidence" value="ECO:0000250"/>
    <property type="project" value="UniProtKB"/>
</dbReference>
<dbReference type="GO" id="GO:0032588">
    <property type="term" value="C:trans-Golgi network membrane"/>
    <property type="evidence" value="ECO:0000250"/>
    <property type="project" value="UniProtKB"/>
</dbReference>
<dbReference type="GO" id="GO:0016500">
    <property type="term" value="F:protein-hormone receptor activity"/>
    <property type="evidence" value="ECO:0007669"/>
    <property type="project" value="InterPro"/>
</dbReference>
<dbReference type="GO" id="GO:0004888">
    <property type="term" value="F:transmembrane signaling receptor activity"/>
    <property type="evidence" value="ECO:0000250"/>
    <property type="project" value="UniProtKB"/>
</dbReference>
<dbReference type="GO" id="GO:2001013">
    <property type="term" value="P:epithelial cell proliferation involved in renal tubule morphogenesis"/>
    <property type="evidence" value="ECO:0000266"/>
    <property type="project" value="RGD"/>
</dbReference>
<dbReference type="GO" id="GO:0007186">
    <property type="term" value="P:G protein-coupled receptor signaling pathway"/>
    <property type="evidence" value="ECO:0007669"/>
    <property type="project" value="UniProtKB-KW"/>
</dbReference>
<dbReference type="GO" id="GO:0001942">
    <property type="term" value="P:hair follicle development"/>
    <property type="evidence" value="ECO:0000266"/>
    <property type="project" value="RGD"/>
</dbReference>
<dbReference type="GO" id="GO:0048839">
    <property type="term" value="P:inner ear development"/>
    <property type="evidence" value="ECO:0000266"/>
    <property type="project" value="RGD"/>
</dbReference>
<dbReference type="GO" id="GO:0009994">
    <property type="term" value="P:oocyte differentiation"/>
    <property type="evidence" value="ECO:0000266"/>
    <property type="project" value="RGD"/>
</dbReference>
<dbReference type="GO" id="GO:0090263">
    <property type="term" value="P:positive regulation of canonical Wnt signaling pathway"/>
    <property type="evidence" value="ECO:0000250"/>
    <property type="project" value="UniProtKB"/>
</dbReference>
<dbReference type="GO" id="GO:0042127">
    <property type="term" value="P:regulation of cell population proliferation"/>
    <property type="evidence" value="ECO:0000266"/>
    <property type="project" value="RGD"/>
</dbReference>
<dbReference type="CDD" id="cd15363">
    <property type="entry name" value="7tmA_LGR5"/>
    <property type="match status" value="1"/>
</dbReference>
<dbReference type="FunFam" id="1.20.1070.10:FF:000028">
    <property type="entry name" value="leucine-rich repeat-containing G-protein coupled receptor 4 isoform X1"/>
    <property type="match status" value="1"/>
</dbReference>
<dbReference type="FunFam" id="3.80.10.10:FF:000028">
    <property type="entry name" value="leucine-rich repeat-containing G-protein coupled receptor 4 isoform X1"/>
    <property type="match status" value="1"/>
</dbReference>
<dbReference type="Gene3D" id="1.20.1070.10">
    <property type="entry name" value="Rhodopsin 7-helix transmembrane proteins"/>
    <property type="match status" value="1"/>
</dbReference>
<dbReference type="Gene3D" id="3.80.10.10">
    <property type="entry name" value="Ribonuclease Inhibitor"/>
    <property type="match status" value="1"/>
</dbReference>
<dbReference type="InterPro" id="IPR000276">
    <property type="entry name" value="GPCR_Rhodpsn"/>
</dbReference>
<dbReference type="InterPro" id="IPR017452">
    <property type="entry name" value="GPCR_Rhodpsn_7TM"/>
</dbReference>
<dbReference type="InterPro" id="IPR002131">
    <property type="entry name" value="Gphrmn_rcpt_fam"/>
</dbReference>
<dbReference type="InterPro" id="IPR001611">
    <property type="entry name" value="Leu-rich_rpt"/>
</dbReference>
<dbReference type="InterPro" id="IPR003591">
    <property type="entry name" value="Leu-rich_rpt_typical-subtyp"/>
</dbReference>
<dbReference type="InterPro" id="IPR032675">
    <property type="entry name" value="LRR_dom_sf"/>
</dbReference>
<dbReference type="InterPro" id="IPR000372">
    <property type="entry name" value="LRRNT"/>
</dbReference>
<dbReference type="PANTHER" id="PTHR24372">
    <property type="entry name" value="GLYCOPROTEIN HORMONE RECEPTOR"/>
    <property type="match status" value="1"/>
</dbReference>
<dbReference type="Pfam" id="PF00001">
    <property type="entry name" value="7tm_1"/>
    <property type="match status" value="1"/>
</dbReference>
<dbReference type="Pfam" id="PF13855">
    <property type="entry name" value="LRR_8"/>
    <property type="match status" value="4"/>
</dbReference>
<dbReference type="Pfam" id="PF01462">
    <property type="entry name" value="LRRNT"/>
    <property type="match status" value="1"/>
</dbReference>
<dbReference type="PRINTS" id="PR00373">
    <property type="entry name" value="GLYCHORMONER"/>
</dbReference>
<dbReference type="PRINTS" id="PR00237">
    <property type="entry name" value="GPCRRHODOPSN"/>
</dbReference>
<dbReference type="SMART" id="SM00364">
    <property type="entry name" value="LRR_BAC"/>
    <property type="match status" value="5"/>
</dbReference>
<dbReference type="SMART" id="SM00365">
    <property type="entry name" value="LRR_SD22"/>
    <property type="match status" value="5"/>
</dbReference>
<dbReference type="SMART" id="SM00369">
    <property type="entry name" value="LRR_TYP"/>
    <property type="match status" value="14"/>
</dbReference>
<dbReference type="SMART" id="SM00013">
    <property type="entry name" value="LRRNT"/>
    <property type="match status" value="1"/>
</dbReference>
<dbReference type="SUPFAM" id="SSF81321">
    <property type="entry name" value="Family A G protein-coupled receptor-like"/>
    <property type="match status" value="1"/>
</dbReference>
<dbReference type="SUPFAM" id="SSF52058">
    <property type="entry name" value="L domain-like"/>
    <property type="match status" value="2"/>
</dbReference>
<dbReference type="PROSITE" id="PS50262">
    <property type="entry name" value="G_PROTEIN_RECEP_F1_2"/>
    <property type="match status" value="1"/>
</dbReference>
<dbReference type="PROSITE" id="PS51450">
    <property type="entry name" value="LRR"/>
    <property type="match status" value="15"/>
</dbReference>
<protein>
    <recommendedName>
        <fullName>Leucine-rich repeat-containing G-protein coupled receptor 5</fullName>
    </recommendedName>
</protein>
<organism>
    <name type="scientific">Rattus norvegicus</name>
    <name type="common">Rat</name>
    <dbReference type="NCBI Taxonomy" id="10116"/>
    <lineage>
        <taxon>Eukaryota</taxon>
        <taxon>Metazoa</taxon>
        <taxon>Chordata</taxon>
        <taxon>Craniata</taxon>
        <taxon>Vertebrata</taxon>
        <taxon>Euteleostomi</taxon>
        <taxon>Mammalia</taxon>
        <taxon>Eutheria</taxon>
        <taxon>Euarchontoglires</taxon>
        <taxon>Glires</taxon>
        <taxon>Rodentia</taxon>
        <taxon>Myomorpha</taxon>
        <taxon>Muroidea</taxon>
        <taxon>Muridae</taxon>
        <taxon>Murinae</taxon>
        <taxon>Rattus</taxon>
    </lineage>
</organism>
<keyword id="KW-1003">Cell membrane</keyword>
<keyword id="KW-1015">Disulfide bond</keyword>
<keyword id="KW-0297">G-protein coupled receptor</keyword>
<keyword id="KW-0325">Glycoprotein</keyword>
<keyword id="KW-0333">Golgi apparatus</keyword>
<keyword id="KW-0433">Leucine-rich repeat</keyword>
<keyword id="KW-0472">Membrane</keyword>
<keyword id="KW-0675">Receptor</keyword>
<keyword id="KW-1185">Reference proteome</keyword>
<keyword id="KW-0677">Repeat</keyword>
<keyword id="KW-0732">Signal</keyword>
<keyword id="KW-0807">Transducer</keyword>
<keyword id="KW-0812">Transmembrane</keyword>
<keyword id="KW-1133">Transmembrane helix</keyword>
<sequence>MDTSRVRMLLSLLALLQLVAAGSPPRPDTMPRGCPSYCHCELDGRMLLRVDCSDLGLSELPSNLSVFTSYLDLSMNNISQLPASLLHRLRFLEELRLAGNALTHIPKGAFAGLHSLKVLMLQNNQLRQVPEEALQNLRSLQSLRLDANHISYVPPSCFSGLHSLRHLWLDDNALTDVPVQAFRSLSALQAMTLALNKIHHIADHAFGNLSSLVVLHLHNNRIHSLGKKCFDGLHSLETLDLNYNNLDEFPTAIKTLSNLKELGFHSNNIRSIPERAFVGNPSLITIHFYDNPIQFVGISAFQHLPELRTLTLNGASQITEFPDLTGTATLESLTLTGAKISSLPQTVCDQLPNLQVLDLSYNLLEDLPSLSGCQKLQKIDLRHNEIYEIKGGTFQQLFNLRSLNLARNKIAIIHPNAFSTLPSLIKLDLSSNLLSSFPVTGLHGLTHLKLTGNRALQSLIPSANFPELKIIEMPYAYQCCAFGGCENVYKIPNQWNKDDSSSVDDLRKKDAGLFQVQDERDLEDFLLDFEEDLKVLHSVQCSPPPGPFKPCEHLFGSWLIRIGVWTTAVLALSCNALVAFTVFRTPLYISSIKLLIGVIAVVDILMGVSSAILAVVDTFTFGSFAQHGAWWEGGIGCQIVGFLSIFASESSVFLLTLAALERGFSVKCSSKFEMKAPLSSLKAIILLCVLLALTIATVPLLGGSEYNASPLCLPLPFGEPSTTGYMVALVLLNSLCFLIMTIAYTRLYCSLEKGELENLWDCSMVKHTALLLFTNCILYCPVAFLSFSSLLNLTFISPEVIKFILLVIVPLPACLNPLLYIVFNPHFKEDMGSLGKQTRFWTRAKHPSLLSINSDDVEKRSCDSTQALVSFTHASIAYDLPSDSGSSPAYPMTESCHLSSVAFVPCL</sequence>
<feature type="signal peptide" evidence="3">
    <location>
        <begin position="1"/>
        <end position="21"/>
    </location>
</feature>
<feature type="chain" id="PRO_0000422818" description="Leucine-rich repeat-containing G-protein coupled receptor 5">
    <location>
        <begin position="22"/>
        <end position="907"/>
    </location>
</feature>
<feature type="topological domain" description="Extracellular" evidence="3">
    <location>
        <begin position="22"/>
        <end position="561"/>
    </location>
</feature>
<feature type="transmembrane region" description="Helical; Name=1" evidence="3">
    <location>
        <begin position="562"/>
        <end position="582"/>
    </location>
</feature>
<feature type="topological domain" description="Cytoplasmic" evidence="3">
    <location>
        <begin position="583"/>
        <end position="595"/>
    </location>
</feature>
<feature type="transmembrane region" description="Helical; Name=2" evidence="3">
    <location>
        <begin position="596"/>
        <end position="616"/>
    </location>
</feature>
<feature type="topological domain" description="Extracellular" evidence="3">
    <location>
        <begin position="617"/>
        <end position="638"/>
    </location>
</feature>
<feature type="transmembrane region" description="Helical; Name=3" evidence="3">
    <location>
        <begin position="639"/>
        <end position="659"/>
    </location>
</feature>
<feature type="topological domain" description="Cytoplasmic" evidence="3">
    <location>
        <begin position="660"/>
        <end position="682"/>
    </location>
</feature>
<feature type="transmembrane region" description="Helical; Name=4" evidence="3">
    <location>
        <begin position="683"/>
        <end position="703"/>
    </location>
</feature>
<feature type="topological domain" description="Extracellular" evidence="3">
    <location>
        <begin position="704"/>
        <end position="723"/>
    </location>
</feature>
<feature type="transmembrane region" description="Helical; Name=5" evidence="3">
    <location>
        <begin position="724"/>
        <end position="744"/>
    </location>
</feature>
<feature type="topological domain" description="Cytoplasmic" evidence="3">
    <location>
        <begin position="745"/>
        <end position="775"/>
    </location>
</feature>
<feature type="transmembrane region" description="Helical; Name=6" evidence="3">
    <location>
        <begin position="776"/>
        <end position="796"/>
    </location>
</feature>
<feature type="topological domain" description="Extracellular" evidence="3">
    <location>
        <begin position="797"/>
        <end position="802"/>
    </location>
</feature>
<feature type="transmembrane region" description="Helical; Name=7" evidence="3">
    <location>
        <begin position="803"/>
        <end position="823"/>
    </location>
</feature>
<feature type="topological domain" description="Cytoplasmic" evidence="3">
    <location>
        <begin position="824"/>
        <end position="907"/>
    </location>
</feature>
<feature type="domain" description="LRRNT">
    <location>
        <begin position="33"/>
        <end position="64"/>
    </location>
</feature>
<feature type="repeat" description="LRR 1">
    <location>
        <begin position="44"/>
        <end position="64"/>
    </location>
</feature>
<feature type="repeat" description="LRR 2">
    <location>
        <begin position="65"/>
        <end position="88"/>
    </location>
</feature>
<feature type="repeat" description="LRR 3">
    <location>
        <begin position="89"/>
        <end position="112"/>
    </location>
</feature>
<feature type="repeat" description="LRR 4">
    <location>
        <begin position="114"/>
        <end position="136"/>
    </location>
</feature>
<feature type="repeat" description="LRR 5">
    <location>
        <begin position="137"/>
        <end position="160"/>
    </location>
</feature>
<feature type="repeat" description="LRR 6">
    <location>
        <begin position="162"/>
        <end position="184"/>
    </location>
</feature>
<feature type="repeat" description="LRR 7">
    <location>
        <begin position="186"/>
        <end position="208"/>
    </location>
</feature>
<feature type="repeat" description="LRR 8">
    <location>
        <begin position="209"/>
        <end position="232"/>
    </location>
</feature>
<feature type="repeat" description="LRR 9">
    <location>
        <begin position="233"/>
        <end position="256"/>
    </location>
</feature>
<feature type="repeat" description="LRR 10">
    <location>
        <begin position="257"/>
        <end position="279"/>
    </location>
</feature>
<feature type="repeat" description="LRR 11">
    <location>
        <begin position="281"/>
        <end position="303"/>
    </location>
</feature>
<feature type="repeat" description="LRR 12">
    <location>
        <begin position="304"/>
        <end position="327"/>
    </location>
</feature>
<feature type="repeat" description="LRR 13">
    <location>
        <begin position="328"/>
        <end position="350"/>
    </location>
</feature>
<feature type="repeat" description="LRR 14">
    <location>
        <begin position="351"/>
        <end position="375"/>
    </location>
</feature>
<feature type="repeat" description="LRR 15">
    <location>
        <begin position="377"/>
        <end position="396"/>
    </location>
</feature>
<feature type="repeat" description="LRR 16">
    <location>
        <begin position="397"/>
        <end position="420"/>
    </location>
</feature>
<feature type="repeat" description="LRR 17">
    <location>
        <begin position="422"/>
        <end position="444"/>
    </location>
</feature>
<feature type="repeat" description="LRR 18">
    <location>
        <begin position="564"/>
        <end position="585"/>
    </location>
</feature>
<feature type="glycosylation site" description="N-linked (GlcNAc...) asparagine" evidence="3">
    <location>
        <position position="63"/>
    </location>
</feature>
<feature type="glycosylation site" description="N-linked (GlcNAc...) asparagine" evidence="3">
    <location>
        <position position="77"/>
    </location>
</feature>
<feature type="glycosylation site" description="N-linked (GlcNAc...) asparagine" evidence="3">
    <location>
        <position position="208"/>
    </location>
</feature>
<feature type="disulfide bond" evidence="4">
    <location>
        <begin position="34"/>
        <end position="40"/>
    </location>
</feature>
<feature type="disulfide bond" evidence="4">
    <location>
        <begin position="38"/>
        <end position="52"/>
    </location>
</feature>
<feature type="disulfide bond" evidence="4">
    <location>
        <begin position="348"/>
        <end position="373"/>
    </location>
</feature>
<feature type="disulfide bond" evidence="4">
    <location>
        <begin position="479"/>
        <end position="541"/>
    </location>
</feature>
<feature type="disulfide bond" evidence="4">
    <location>
        <begin position="637"/>
        <end position="712"/>
    </location>
</feature>
<evidence type="ECO:0000250" key="1"/>
<evidence type="ECO:0000250" key="2">
    <source>
        <dbReference type="UniProtKB" id="O75473"/>
    </source>
</evidence>
<evidence type="ECO:0000255" key="3"/>
<evidence type="ECO:0000255" key="4">
    <source>
        <dbReference type="PROSITE-ProRule" id="PRU00521"/>
    </source>
</evidence>
<accession>D4AC13</accession>
<proteinExistence type="inferred from homology"/>